<keyword id="KW-0002">3D-structure</keyword>
<keyword id="KW-0903">Direct protein sequencing</keyword>
<keyword id="KW-1015">Disulfide bond</keyword>
<keyword id="KW-0325">Glycoprotein</keyword>
<keyword id="KW-0372">Hormone</keyword>
<keyword id="KW-0582">Pharmaceutical</keyword>
<keyword id="KW-0654">Proteoglycan</keyword>
<keyword id="KW-1267">Proteomics identification</keyword>
<keyword id="KW-1185">Reference proteome</keyword>
<keyword id="KW-0964">Secreted</keyword>
<keyword id="KW-0732">Signal</keyword>
<keyword id="KW-0838">Vasoactive</keyword>
<keyword id="KW-0840">Vasodilator</keyword>
<feature type="signal peptide" evidence="19">
    <location>
        <begin position="1"/>
        <end position="26"/>
    </location>
</feature>
<feature type="chain" id="PRO_0000001531" description="Natriuretic peptides B">
    <location>
        <begin position="27"/>
        <end position="134"/>
    </location>
</feature>
<feature type="peptide" id="PRO_0000451939" description="NT-proBNP" evidence="36">
    <location>
        <begin position="27"/>
        <end position="102"/>
    </location>
</feature>
<feature type="peptide" id="PRO_0000451940" description="proBNP(3-108)" evidence="35">
    <location>
        <begin position="29"/>
        <end position="134"/>
    </location>
</feature>
<feature type="peptide" id="PRO_0000001532" description="Brain natriuretic peptide 32" evidence="18 19">
    <location>
        <begin position="103"/>
        <end position="134"/>
    </location>
</feature>
<feature type="peptide" id="PRO_0000364993" description="BNP(1-30)">
    <location>
        <begin position="103"/>
        <end position="132"/>
    </location>
</feature>
<feature type="peptide" id="PRO_0000364994" description="BNP(1-29)">
    <location>
        <begin position="103"/>
        <end position="131"/>
    </location>
</feature>
<feature type="peptide" id="PRO_0000364995" description="BNP(1-28)">
    <location>
        <begin position="103"/>
        <end position="130"/>
    </location>
</feature>
<feature type="peptide" id="PRO_0000364996" description="BNP(2-31)">
    <location>
        <begin position="104"/>
        <end position="133"/>
    </location>
</feature>
<feature type="peptide" id="PRO_0000364997" description="BNP(3-32)" evidence="35">
    <location>
        <begin position="105"/>
        <end position="134"/>
    </location>
</feature>
<feature type="peptide" id="PRO_0000364998" description="BNP(3-30)">
    <location>
        <begin position="105"/>
        <end position="132"/>
    </location>
</feature>
<feature type="peptide" id="PRO_0000364999" description="BNP(3-29)">
    <location>
        <begin position="105"/>
        <end position="131"/>
    </location>
</feature>
<feature type="peptide" id="PRO_0000365000" description="Brain natriuretic peptide 29">
    <location>
        <begin position="106"/>
        <end position="134"/>
    </location>
</feature>
<feature type="peptide" id="PRO_0000365001" description="BNP(4-31)">
    <location>
        <begin position="106"/>
        <end position="133"/>
    </location>
</feature>
<feature type="peptide" id="PRO_0000365002" description="BNP(4-30)">
    <location>
        <begin position="106"/>
        <end position="132"/>
    </location>
</feature>
<feature type="peptide" id="PRO_0000365003" description="BNP(4-29)">
    <location>
        <begin position="106"/>
        <end position="131"/>
    </location>
</feature>
<feature type="peptide" id="PRO_0000365004" description="BNP(4-27)">
    <location>
        <begin position="106"/>
        <end position="129"/>
    </location>
</feature>
<feature type="peptide" id="PRO_0000365005" description="BNP(5-32)">
    <location>
        <begin position="107"/>
        <end position="134"/>
    </location>
</feature>
<feature type="peptide" id="PRO_0000365006" description="BNP(5-31)">
    <location>
        <begin position="107"/>
        <end position="133"/>
    </location>
</feature>
<feature type="peptide" id="PRO_0000365007" description="BNP(5-29)">
    <location>
        <begin position="107"/>
        <end position="131"/>
    </location>
</feature>
<feature type="site" description="Cleavage; by CORIN" evidence="21">
    <location>
        <begin position="99"/>
        <end position="100"/>
    </location>
</feature>
<feature type="site" description="Cleavage; by FURIN or CORIN" evidence="15 21">
    <location>
        <begin position="102"/>
        <end position="103"/>
    </location>
</feature>
<feature type="site" description="Cleavage; by FAP" evidence="17">
    <location>
        <begin position="104"/>
        <end position="105"/>
    </location>
</feature>
<feature type="site" description="Cleavage; by CORIN" evidence="15 21">
    <location>
        <begin position="105"/>
        <end position="106"/>
    </location>
</feature>
<feature type="glycosylation site" description="O-linked (Xyl...) (chondroitin sulfate) serine" evidence="23">
    <location>
        <position position="41"/>
    </location>
</feature>
<feature type="glycosylation site" description="O-linked (HexNAc...) threonine; Partial" evidence="7">
    <location>
        <position position="62"/>
    </location>
</feature>
<feature type="glycosylation site" description="O-linked (HexNAc...) serine" evidence="7">
    <location>
        <position position="63"/>
    </location>
</feature>
<feature type="glycosylation site" description="O-linked (HexNAc...) serine" evidence="7">
    <location>
        <position position="70"/>
    </location>
</feature>
<feature type="glycosylation site" description="O-linked (HexNAc...) threonine" evidence="7">
    <location>
        <position position="74"/>
    </location>
</feature>
<feature type="glycosylation site" description="O-linked (HexNAc...) serine" evidence="7">
    <location>
        <position position="79"/>
    </location>
</feature>
<feature type="glycosylation site" description="O-linked (HexNAc...) threonine; Partial" evidence="7">
    <location>
        <position position="84"/>
    </location>
</feature>
<feature type="glycosylation site" description="O-linked (HexNAc...) threonine" evidence="7 21">
    <location>
        <position position="97"/>
    </location>
</feature>
<feature type="disulfide bond" evidence="8">
    <location>
        <begin position="112"/>
        <end position="128"/>
    </location>
</feature>
<feature type="sequence variant" id="VAR_014580" description="In dbSNP:rs5227.">
    <original>R</original>
    <variation>L</variation>
    <location>
        <position position="25"/>
    </location>
</feature>
<feature type="sequence variant" id="VAR_014581" description="In dbSNP:rs5229.">
    <original>R</original>
    <variation>H</variation>
    <location>
        <position position="47"/>
    </location>
</feature>
<feature type="sequence variant" id="VAR_014582" description="In dbSNP:rs5230.">
    <original>M</original>
    <variation>L</variation>
    <location>
        <position position="93"/>
    </location>
</feature>
<feature type="mutagenesis site" description="Prevents O-glycosylation at this residue. Decreased extracellular levels of NPPB due to decreased stability after secretion whereas extracellular levels of brain natriuretic peptide 32 is increased. In HEK293 cells, proteolytic processing by CORIN or FURIN is reduced but in HL1 cells proteolytic processing is not affected." evidence="20 21">
    <original>T</original>
    <variation>A</variation>
    <location>
        <position position="97"/>
    </location>
</feature>
<feature type="mutagenesis site" description="Loss of FURIN-mediated proteolytic processing in HEK293 cells, however processing in HL1 cells, likely mediated by CORIN, is only slightly reduced. Loss of CORIN-mediated processing in HL1 cells; when associated with A-102 and A-105." evidence="21">
    <original>R</original>
    <variation>A</variation>
    <location>
        <position position="99"/>
    </location>
</feature>
<feature type="mutagenesis site" description="Loss of FURIN-mediated proteolytic processing in HEK293 cells, however processing in HL1 cells, likely mediated by CORIN, is only slightly reduced. Loss of CORIN-mediated processing in HL1 cells; when associated with A-99 and A-105." evidence="21">
    <original>R</original>
    <variation>A</variation>
    <location>
        <position position="102"/>
    </location>
</feature>
<feature type="mutagenesis site" description="No effect on proteolytic processing in HEK293 or HL1 cells. Loss of CORIN-mediated processing in HL1 cells; when associated with A-99 and A-102." evidence="21">
    <original>K</original>
    <variation>A</variation>
    <location>
        <position position="105"/>
    </location>
</feature>
<feature type="strand" evidence="38">
    <location>
        <begin position="121"/>
        <end position="123"/>
    </location>
</feature>
<comment type="function">
    <molecule>Brain natriuretic peptide 32</molecule>
    <text evidence="3 6 8 9 11 13 16 22 24">Cardiac hormone that plays a key role in mediating cardio-renal homeostasis (PubMed:1672777, PubMed:17372040, PubMed:1914098, PubMed:9458824). May also function as a paracrine antifibrotic factor in the heart (By similarity). Acts by specifically binding and stimulating NPR1 to produce cGMP, which in turn activates effector proteins that drive various biological responses (PubMed:1672777, PubMed:17349887, PubMed:17372040, PubMed:21098034, PubMed:25339504, PubMed:9458824). Involved in regulating the extracellular fluid volume and maintaining the fluid-electrolyte balance through natriuresis, diuresis, vasorelaxation, and inhibition of renin and aldosterone secretion (PubMed:1914098, PubMed:9458824). Binds the clearance receptor NPR3 (PubMed:16870210).</text>
</comment>
<comment type="function">
    <molecule>NT-proBNP</molecule>
    <text evidence="11">May affect cardio-renal homeostasis (PubMed:17372040). Able to promote the production of cGMP although its potency is very low compared to brain natriuretic peptide 32 (PubMed:17372040).</text>
</comment>
<comment type="function">
    <molecule>BNP(3-32)</molecule>
    <text evidence="11">May have a role in cardio-renal homeostasis (PubMed:17372040). Able to promote the production of cGMP (PubMed:17372040).</text>
</comment>
<comment type="interaction">
    <interactant intactId="EBI-747044">
        <id>P16860</id>
    </interactant>
    <interactant intactId="EBI-3867333">
        <id>A8MQ03</id>
        <label>CYSRT1</label>
    </interactant>
    <organismsDiffer>false</organismsDiffer>
    <experiments>3</experiments>
</comment>
<comment type="interaction">
    <interactant intactId="EBI-747044">
        <id>P16860</id>
    </interactant>
    <interactant intactId="EBI-356700">
        <id>P57678</id>
        <label>GEMIN4</label>
    </interactant>
    <organismsDiffer>false</organismsDiffer>
    <experiments>3</experiments>
</comment>
<comment type="interaction">
    <interactant intactId="EBI-747044">
        <id>P16860</id>
    </interactant>
    <interactant intactId="EBI-10171697">
        <id>Q6A162</id>
        <label>KRT40</label>
    </interactant>
    <organismsDiffer>false</organismsDiffer>
    <experiments>3</experiments>
</comment>
<comment type="interaction">
    <interactant intactId="EBI-747044">
        <id>P16860</id>
    </interactant>
    <interactant intactId="EBI-10172052">
        <id>P60411</id>
        <label>KRTAP10-9</label>
    </interactant>
    <organismsDiffer>false</organismsDiffer>
    <experiments>3</experiments>
</comment>
<comment type="interaction">
    <interactant intactId="EBI-747044">
        <id>P16860</id>
    </interactant>
    <interactant intactId="EBI-945833">
        <id>Q7Z3S9</id>
        <label>NOTCH2NLA</label>
    </interactant>
    <organismsDiffer>false</organismsDiffer>
    <experiments>4</experiments>
</comment>
<comment type="interaction">
    <interactant intactId="EBI-747044">
        <id>P16860</id>
    </interactant>
    <interactant intactId="EBI-348380">
        <id>P25788</id>
        <label>PSMA3</label>
    </interactant>
    <organismsDiffer>false</organismsDiffer>
    <experiments>3</experiments>
</comment>
<comment type="interaction">
    <interactant intactId="EBI-747044">
        <id>P16860</id>
    </interactant>
    <interactant intactId="EBI-748621">
        <id>Q9UJW9</id>
        <label>SERTAD3</label>
    </interactant>
    <organismsDiffer>false</organismsDiffer>
    <experiments>3</experiments>
</comment>
<comment type="subcellular location">
    <molecule>NT-proBNP</molecule>
    <subcellularLocation>
        <location evidence="12 22">Secreted</location>
    </subcellularLocation>
    <text evidence="12 22">Detected in blood.</text>
</comment>
<comment type="subcellular location">
    <molecule>proBNP(3-108)</molecule>
    <subcellularLocation>
        <location evidence="10">Secreted</location>
    </subcellularLocation>
    <text evidence="10">Detected in blood.</text>
</comment>
<comment type="subcellular location">
    <molecule>Brain natriuretic peptide 32</molecule>
    <subcellularLocation>
        <location evidence="10 12 13 22">Secreted</location>
    </subcellularLocation>
    <text evidence="10 12 13 22">Detected in blood.</text>
</comment>
<comment type="subcellular location">
    <molecule>BNP(3-32)</molecule>
    <subcellularLocation>
        <location evidence="10">Secreted</location>
    </subcellularLocation>
    <text evidence="10">Detected in blood.</text>
</comment>
<comment type="tissue specificity">
    <molecule>Brain natriuretic peptide 32</molecule>
    <text evidence="18 19 25">Detected in the cardiac atria (at protein level) (PubMed:2136732, PubMed:2138890). Detected in the kidney distal tubular cells (at protein level) (PubMed:9794555).</text>
</comment>
<comment type="PTM">
    <text evidence="4 15 17 20 21 22">The precursor molecule is proteolytically cleaved by the endoproteases FURIN or CORIN at Arg-102 to produce brain natriuretic peptide 32 and NT-proBNP (PubMed:10880574, PubMed:20489134, PubMed:21314817, PubMed:21482747, PubMed:21763278). This likely occurs after it has been secreted into the blood, either during circulation or in the target cells (PubMed:21482747). CORIN also cleaves the precursor molecule at additional residues including Arg-99 and possibly Lys-105 (PubMed:20489134, PubMed:21763278). In patients with heart failure, processing and degradation of natriuretic peptides B occurs but is delayed, possibly due to a decrease in enzyme level or activity of CORIN and DPP4 (PubMed:25339504).</text>
</comment>
<comment type="PTM">
    <molecule>Brain natriuretic peptide 32</molecule>
    <text evidence="5 14 16 17">Undergoes further proteolytic cleavage by various proteases such as DPP4, MME and possibly FAP, to give rise to a variety of shorter peptides (PubMed:16254193, PubMed:19808300, PubMed:21098034, PubMed:21314817). Cleaved at Pro-104 by the prolyl endopeptidase FAP (seprase) activity (in vitro) (PubMed:21314817). Degraded by IDE (PubMed:21098034). During IDE degradation, the resulting products initially increase the activation of NPR1 and can also stimulate NPR2 to produce cGMP before the fragments are completely degraded and inactivated by IDE (in vitro) (PubMed:21098034).</text>
</comment>
<comment type="PTM">
    <text evidence="7 9 15 20 21">O-glycosylated on at least seven residues (PubMed:16750161, PubMed:17349887, PubMed:20489134, PubMed:21482747, PubMed:21763278). In cardiomyocytes, glycosylation at Thr-97 is essential for the stability and processing of the extracellular natriuretic peptides B (PubMed:21482747). Glycosylation, especially at Thr-97, may also be important for brain natriuretic peptide 32 stability and/or extracellular distribution (PubMed:21763278). Glycosylation at Thr-97 appears to inhibit FURIN- or CORIN-mediated proteolytic processing, at least in HEK293 cells (PubMed:20489134, PubMed:21763278).</text>
</comment>
<comment type="pharmaceutical">
    <text>Available under the name Nesiritide (Scios). Used for the treatment of heart failure.</text>
</comment>
<comment type="miscellaneous">
    <text evidence="9 11 12 20 22">Plasma levels of natriuretic peptides B, brain natriuretic peptide 32 and NT-proBNP are widely used for screening and diagnosis of heart failure (HF), as these markers are typically higher in patients with severe HF.</text>
</comment>
<comment type="similarity">
    <text evidence="34">Belongs to the natriuretic peptide family.</text>
</comment>
<comment type="sequence caution" evidence="34">
    <conflict type="frameshift">
        <sequence resource="EMBL-CDS" id="BAA90441"/>
    </conflict>
</comment>
<comment type="online information" name="Wikipedia">
    <link uri="https://en.wikipedia.org/wiki/Brain_natriuretic_peptide"/>
    <text>Brain natriuretic peptide entry</text>
</comment>
<reference key="1">
    <citation type="journal article" date="1989" name="Biochem. Biophys. Res. Commun.">
        <title>Human and canine gene homologs of porcine brain natriuretic peptide.</title>
        <authorList>
            <person name="Seilhamer J.J."/>
            <person name="Arfsten A."/>
            <person name="Miller J.A."/>
            <person name="Lundquist P."/>
            <person name="Scarborough R.M."/>
            <person name="Lewicki J.A."/>
            <person name="Porter J.G."/>
        </authorList>
    </citation>
    <scope>NUCLEOTIDE SEQUENCE [GENOMIC DNA]</scope>
</reference>
<reference key="2">
    <citation type="journal article" date="1989" name="Biochem. Biophys. Res. Commun.">
        <title>Cloning and sequence analysis of cDNA encoding a precursor for human brain natriuretic peptide.</title>
        <authorList>
            <person name="Sudoh T."/>
            <person name="Maekawa K."/>
            <person name="Kojima M."/>
            <person name="Minamino N."/>
            <person name="Kangawa K."/>
            <person name="Matsuo H."/>
        </authorList>
    </citation>
    <scope>NUCLEOTIDE SEQUENCE [MRNA]</scope>
</reference>
<reference key="3">
    <citation type="submission" date="2000-01" db="EMBL/GenBank/DDBJ databases">
        <title>Silver Project.</title>
        <authorList>
            <person name="Kitano T."/>
            <person name="Kobayakawa H."/>
            <person name="Saitou N."/>
        </authorList>
    </citation>
    <scope>NUCLEOTIDE SEQUENCE [GENOMIC DNA]</scope>
</reference>
<reference key="4">
    <citation type="submission" date="2004-06" db="EMBL/GenBank/DDBJ databases">
        <title>Cloning of human full open reading frames in Gateway(TM) system entry vector (pDONR201).</title>
        <authorList>
            <person name="Halleck A."/>
            <person name="Ebert L."/>
            <person name="Mkoundinya M."/>
            <person name="Schick M."/>
            <person name="Eisenstein S."/>
            <person name="Neubert P."/>
            <person name="Kstrang K."/>
            <person name="Schatten R."/>
            <person name="Shen B."/>
            <person name="Henze S."/>
            <person name="Mar W."/>
            <person name="Korn B."/>
            <person name="Zuo D."/>
            <person name="Hu Y."/>
            <person name="LaBaer J."/>
        </authorList>
    </citation>
    <scope>NUCLEOTIDE SEQUENCE [LARGE SCALE MRNA]</scope>
</reference>
<reference key="5">
    <citation type="submission" date="2007-12" db="EMBL/GenBank/DDBJ databases">
        <authorList>
            <consortium name="NHLBI resequencing and genotyping service (RS&amp;G)"/>
        </authorList>
    </citation>
    <scope>NUCLEOTIDE SEQUENCE [GENOMIC DNA]</scope>
</reference>
<reference key="6">
    <citation type="journal article" date="2006" name="Nature">
        <title>The DNA sequence and biological annotation of human chromosome 1.</title>
        <authorList>
            <person name="Gregory S.G."/>
            <person name="Barlow K.F."/>
            <person name="McLay K.E."/>
            <person name="Kaul R."/>
            <person name="Swarbreck D."/>
            <person name="Dunham A."/>
            <person name="Scott C.E."/>
            <person name="Howe K.L."/>
            <person name="Woodfine K."/>
            <person name="Spencer C.C.A."/>
            <person name="Jones M.C."/>
            <person name="Gillson C."/>
            <person name="Searle S."/>
            <person name="Zhou Y."/>
            <person name="Kokocinski F."/>
            <person name="McDonald L."/>
            <person name="Evans R."/>
            <person name="Phillips K."/>
            <person name="Atkinson A."/>
            <person name="Cooper R."/>
            <person name="Jones C."/>
            <person name="Hall R.E."/>
            <person name="Andrews T.D."/>
            <person name="Lloyd C."/>
            <person name="Ainscough R."/>
            <person name="Almeida J.P."/>
            <person name="Ambrose K.D."/>
            <person name="Anderson F."/>
            <person name="Andrew R.W."/>
            <person name="Ashwell R.I.S."/>
            <person name="Aubin K."/>
            <person name="Babbage A.K."/>
            <person name="Bagguley C.L."/>
            <person name="Bailey J."/>
            <person name="Beasley H."/>
            <person name="Bethel G."/>
            <person name="Bird C.P."/>
            <person name="Bray-Allen S."/>
            <person name="Brown J.Y."/>
            <person name="Brown A.J."/>
            <person name="Buckley D."/>
            <person name="Burton J."/>
            <person name="Bye J."/>
            <person name="Carder C."/>
            <person name="Chapman J.C."/>
            <person name="Clark S.Y."/>
            <person name="Clarke G."/>
            <person name="Clee C."/>
            <person name="Cobley V."/>
            <person name="Collier R.E."/>
            <person name="Corby N."/>
            <person name="Coville G.J."/>
            <person name="Davies J."/>
            <person name="Deadman R."/>
            <person name="Dunn M."/>
            <person name="Earthrowl M."/>
            <person name="Ellington A.G."/>
            <person name="Errington H."/>
            <person name="Frankish A."/>
            <person name="Frankland J."/>
            <person name="French L."/>
            <person name="Garner P."/>
            <person name="Garnett J."/>
            <person name="Gay L."/>
            <person name="Ghori M.R.J."/>
            <person name="Gibson R."/>
            <person name="Gilby L.M."/>
            <person name="Gillett W."/>
            <person name="Glithero R.J."/>
            <person name="Grafham D.V."/>
            <person name="Griffiths C."/>
            <person name="Griffiths-Jones S."/>
            <person name="Grocock R."/>
            <person name="Hammond S."/>
            <person name="Harrison E.S.I."/>
            <person name="Hart E."/>
            <person name="Haugen E."/>
            <person name="Heath P.D."/>
            <person name="Holmes S."/>
            <person name="Holt K."/>
            <person name="Howden P.J."/>
            <person name="Hunt A.R."/>
            <person name="Hunt S.E."/>
            <person name="Hunter G."/>
            <person name="Isherwood J."/>
            <person name="James R."/>
            <person name="Johnson C."/>
            <person name="Johnson D."/>
            <person name="Joy A."/>
            <person name="Kay M."/>
            <person name="Kershaw J.K."/>
            <person name="Kibukawa M."/>
            <person name="Kimberley A.M."/>
            <person name="King A."/>
            <person name="Knights A.J."/>
            <person name="Lad H."/>
            <person name="Laird G."/>
            <person name="Lawlor S."/>
            <person name="Leongamornlert D.A."/>
            <person name="Lloyd D.M."/>
            <person name="Loveland J."/>
            <person name="Lovell J."/>
            <person name="Lush M.J."/>
            <person name="Lyne R."/>
            <person name="Martin S."/>
            <person name="Mashreghi-Mohammadi M."/>
            <person name="Matthews L."/>
            <person name="Matthews N.S.W."/>
            <person name="McLaren S."/>
            <person name="Milne S."/>
            <person name="Mistry S."/>
            <person name="Moore M.J.F."/>
            <person name="Nickerson T."/>
            <person name="O'Dell C.N."/>
            <person name="Oliver K."/>
            <person name="Palmeiri A."/>
            <person name="Palmer S.A."/>
            <person name="Parker A."/>
            <person name="Patel D."/>
            <person name="Pearce A.V."/>
            <person name="Peck A.I."/>
            <person name="Pelan S."/>
            <person name="Phelps K."/>
            <person name="Phillimore B.J."/>
            <person name="Plumb R."/>
            <person name="Rajan J."/>
            <person name="Raymond C."/>
            <person name="Rouse G."/>
            <person name="Saenphimmachak C."/>
            <person name="Sehra H.K."/>
            <person name="Sheridan E."/>
            <person name="Shownkeen R."/>
            <person name="Sims S."/>
            <person name="Skuce C.D."/>
            <person name="Smith M."/>
            <person name="Steward C."/>
            <person name="Subramanian S."/>
            <person name="Sycamore N."/>
            <person name="Tracey A."/>
            <person name="Tromans A."/>
            <person name="Van Helmond Z."/>
            <person name="Wall M."/>
            <person name="Wallis J.M."/>
            <person name="White S."/>
            <person name="Whitehead S.L."/>
            <person name="Wilkinson J.E."/>
            <person name="Willey D.L."/>
            <person name="Williams H."/>
            <person name="Wilming L."/>
            <person name="Wray P.W."/>
            <person name="Wu Z."/>
            <person name="Coulson A."/>
            <person name="Vaudin M."/>
            <person name="Sulston J.E."/>
            <person name="Durbin R.M."/>
            <person name="Hubbard T."/>
            <person name="Wooster R."/>
            <person name="Dunham I."/>
            <person name="Carter N.P."/>
            <person name="McVean G."/>
            <person name="Ross M.T."/>
            <person name="Harrow J."/>
            <person name="Olson M.V."/>
            <person name="Beck S."/>
            <person name="Rogers J."/>
            <person name="Bentley D.R."/>
        </authorList>
    </citation>
    <scope>NUCLEOTIDE SEQUENCE [LARGE SCALE GENOMIC DNA]</scope>
</reference>
<reference key="7">
    <citation type="submission" date="2005-07" db="EMBL/GenBank/DDBJ databases">
        <authorList>
            <person name="Mural R.J."/>
            <person name="Istrail S."/>
            <person name="Sutton G.G."/>
            <person name="Florea L."/>
            <person name="Halpern A.L."/>
            <person name="Mobarry C.M."/>
            <person name="Lippert R."/>
            <person name="Walenz B."/>
            <person name="Shatkay H."/>
            <person name="Dew I."/>
            <person name="Miller J.R."/>
            <person name="Flanigan M.J."/>
            <person name="Edwards N.J."/>
            <person name="Bolanos R."/>
            <person name="Fasulo D."/>
            <person name="Halldorsson B.V."/>
            <person name="Hannenhalli S."/>
            <person name="Turner R."/>
            <person name="Yooseph S."/>
            <person name="Lu F."/>
            <person name="Nusskern D.R."/>
            <person name="Shue B.C."/>
            <person name="Zheng X.H."/>
            <person name="Zhong F."/>
            <person name="Delcher A.L."/>
            <person name="Huson D.H."/>
            <person name="Kravitz S.A."/>
            <person name="Mouchard L."/>
            <person name="Reinert K."/>
            <person name="Remington K.A."/>
            <person name="Clark A.G."/>
            <person name="Waterman M.S."/>
            <person name="Eichler E.E."/>
            <person name="Adams M.D."/>
            <person name="Hunkapiller M.W."/>
            <person name="Myers E.W."/>
            <person name="Venter J.C."/>
        </authorList>
    </citation>
    <scope>NUCLEOTIDE SEQUENCE [LARGE SCALE GENOMIC DNA]</scope>
</reference>
<reference key="8">
    <citation type="journal article" date="2004" name="Genome Res.">
        <title>The status, quality, and expansion of the NIH full-length cDNA project: the Mammalian Gene Collection (MGC).</title>
        <authorList>
            <consortium name="The MGC Project Team"/>
        </authorList>
    </citation>
    <scope>NUCLEOTIDE SEQUENCE [LARGE SCALE MRNA]</scope>
    <source>
        <tissue>Pancreas</tissue>
        <tissue>Spleen</tissue>
    </source>
</reference>
<reference key="9">
    <citation type="journal article" date="1990" name="Biochem. Biophys. Res. Commun.">
        <title>Isolation and identification of human brain natriuretic peptides in cardiac atrium.</title>
        <authorList>
            <person name="Hino J."/>
            <person name="Tateyaa H."/>
            <person name="Minamino N."/>
            <person name="Kangawa K."/>
            <person name="Matsuo H."/>
        </authorList>
    </citation>
    <scope>PROTEIN SEQUENCE OF 27-58 AND 103-134</scope>
    <scope>TISSUE SPECIFICITY (BRAIN NATRIURETIC PEPTIDE 32)</scope>
</reference>
<reference key="10">
    <citation type="journal article" date="1990" name="FEBS Lett.">
        <title>Isolation and sequence determination of human brain natriuretic peptide in human atrium.</title>
        <authorList>
            <person name="Kambayashi Y."/>
            <person name="Nakao K."/>
            <person name="Mukoyama M."/>
            <person name="Saito Y."/>
            <person name="Ogawa Y."/>
            <person name="Shiono S."/>
            <person name="Inouye K."/>
            <person name="Yoshida N."/>
            <person name="Imura H."/>
        </authorList>
    </citation>
    <scope>PROTEIN SEQUENCE OF 103-134</scope>
    <scope>TISSUE SPECIFICITY (BRAIN NATRIURETIC PEPTIDE 32)</scope>
</reference>
<reference key="11">
    <citation type="journal article" date="1991" name="Circulation">
        <title>Hemodynamic, renal, and hormonal responses to brain natriuretic peptide infusion in patients with congestive heart failure.</title>
        <authorList>
            <person name="Yoshimura M."/>
            <person name="Yasue H."/>
            <person name="Morita E."/>
            <person name="Sakaino N."/>
            <person name="Jougasaki M."/>
            <person name="Kurose M."/>
            <person name="Mukoyama M."/>
            <person name="Saito Y."/>
            <person name="Nakao K."/>
            <person name="Imura H."/>
        </authorList>
    </citation>
    <scope>FUNCTION (BRAIN NATRIURETIC PEPTIDE 32)</scope>
    <scope>SUBCELLULAR LOCATION (BRAIN NATRIURETIC PEPTIDE 32)</scope>
</reference>
<reference key="12">
    <citation type="journal article" date="1991" name="Science">
        <title>Selective activation of the B natriuretic peptide receptor by C-type natriuretic peptide (CNP).</title>
        <authorList>
            <person name="Koller K.J."/>
            <person name="Lowe D.G."/>
            <person name="Bennett G.L."/>
            <person name="Minamino N."/>
            <person name="Kangawa K."/>
            <person name="Matsuo H."/>
            <person name="Goeddel D.V."/>
        </authorList>
    </citation>
    <scope>RECEPTOR-BINDING (BRAIN NATRIURETIC PEPTIDE 32)</scope>
</reference>
<reference key="13">
    <citation type="journal article" date="1998" name="Am. J. Physiol.">
        <title>Effect of BNP on renal hemodynamics, tubular function and vasoactive hormones in humans.</title>
        <authorList>
            <person name="Jensen K.T."/>
            <person name="Carstens J."/>
            <person name="Pedersen E.B."/>
        </authorList>
    </citation>
    <scope>FUNCTION (BRAIN NATRIURETIC PEPTIDE 32)</scope>
</reference>
<reference key="14">
    <citation type="journal article" date="1998" name="Nephrol. Dial. Transplant.">
        <title>The renal natriuretic peptide urodilatin is present in human kidney.</title>
        <authorList>
            <person name="Herten M."/>
            <person name="Lenz W."/>
            <person name="Gerzer R."/>
            <person name="Drummer C."/>
        </authorList>
    </citation>
    <scope>TISSUE SPECIFICITY (BRAIN NATRIURETIC PEPTIDE 32)</scope>
</reference>
<reference key="15">
    <citation type="journal article" date="2000" name="Proc. Natl. Acad. Sci. U.S.A.">
        <title>Corin, a transmembrane cardiac serine protease, acts as a pro-atrial natriuretic peptide-converting enzyme.</title>
        <authorList>
            <person name="Yan W."/>
            <person name="Wu F."/>
            <person name="Morser J."/>
            <person name="Wu Q."/>
        </authorList>
    </citation>
    <scope>PROTEOLYTIC PROCESSING BY CORIN</scope>
</reference>
<reference key="16">
    <citation type="journal article" date="2006" name="Arch. Biochem. Biophys.">
        <title>The precursor to B-type natriuretic peptide is an O-linked glycoprotein.</title>
        <authorList>
            <person name="Schellenberger U."/>
            <person name="O'Rear J."/>
            <person name="Guzzetta A."/>
            <person name="Jue R.A."/>
            <person name="Protter A.A."/>
            <person name="Pollitt N.S."/>
        </authorList>
    </citation>
    <scope>GLYCOSYLATION AT THR-62; SER-63; SER-70; THR-74; SER-79; THR-84 AND THR-97</scope>
</reference>
<reference key="17">
    <citation type="journal article" date="2006" name="Clin. Chem.">
        <title>Dipeptidyl-peptidase IV converts intact B-type natriuretic peptide into its des-SerPro form.</title>
        <authorList>
            <person name="Brandt I."/>
            <person name="Lambeir A.M."/>
            <person name="Ketelslegers J.M."/>
            <person name="Vanderheyden M."/>
            <person name="Scharpe S."/>
            <person name="De Meester I."/>
        </authorList>
    </citation>
    <scope>PROTEOLYTIC CLEAVAGE BY DPP4 AND MME (BRAIN NATRIURETIC PEPTIDE 32)</scope>
</reference>
<reference key="18">
    <citation type="journal article" date="2007" name="Hypertension">
        <title>Immunoreactivity and guanosine 3',5'-cyclic monophosphate activating actions of various molecular forms of human B-type natriuretic peptide.</title>
        <authorList>
            <person name="Heublein D.M."/>
            <person name="Huntley B.K."/>
            <person name="Boerrigter G."/>
            <person name="Cataliotti A."/>
            <person name="Sandberg S.M."/>
            <person name="Redfield M.M."/>
            <person name="Burnett J.C. Jr."/>
        </authorList>
    </citation>
    <scope>FUNCTION (NT-PROBNP; BRAIN NATRIURETIC PEPTIDE 32 AND BNP(3-32))</scope>
</reference>
<reference key="19">
    <citation type="journal article" date="2007" name="J. Am. Coll. Cardiol.">
        <title>Evidence for functional heterogeneity of circulating B-type natriuretic peptide.</title>
        <authorList>
            <person name="Liang F."/>
            <person name="O'Rear J."/>
            <person name="Schellenberger U."/>
            <person name="Tai L."/>
            <person name="Lasecki M."/>
            <person name="Schreiner G.F."/>
            <person name="Apple F.S."/>
            <person name="Maisel A.S."/>
            <person name="Pollitt N.S."/>
            <person name="Protter A.A."/>
        </authorList>
    </citation>
    <scope>FUNCTION (BRAIN NATRIURETIC PEPTIDE 32)</scope>
</reference>
<reference key="20">
    <citation type="journal article" date="2007" name="J. Am. Coll. Cardiol.">
        <title>Alternate circulating pro-B-type natriuretic peptide and B-type natriuretic peptide forms in the general population.</title>
        <authorList>
            <person name="Lam C.S."/>
            <person name="Burnett J.C. Jr."/>
            <person name="Costello-Boerrigter L."/>
            <person name="Rodeheffer R.J."/>
            <person name="Redfield M.M."/>
        </authorList>
    </citation>
    <scope>SYNTHESIS (PROBNP(3-108); BRAIN NATRIURETIC PEPTIDE 32 AND BNP(3-32))</scope>
    <scope>SUBCELLULAR LOCATION (PROBNP(3-108); BRAIN NATRIURETIC PEPTIDE 32 AND BNP(3-32))</scope>
</reference>
<reference key="21">
    <citation type="journal article" date="2008" name="Circ. Heart Fail.">
        <title>Detection of endogenous B-type natriuretic peptide at very low concentrations in patients with heart failure.</title>
        <authorList>
            <person name="Niederkofler E.E."/>
            <person name="Kiernan U.A."/>
            <person name="O'Rear J."/>
            <person name="Menon S."/>
            <person name="Saghir S."/>
            <person name="Protter A.A."/>
            <person name="Nelson R.W."/>
            <person name="Schellenberger U."/>
        </authorList>
    </citation>
    <scope>PROTEOLYTIC PROCESSING (BRAIN NATRIURETIC PEPTIDE 32)</scope>
    <scope>IDENTIFICATION BY MASS SPECTROMETRY</scope>
</reference>
<reference key="22">
    <citation type="journal article" date="2008" name="J. Am. Coll. Cardiol.">
        <title>Pro-B-type natriuretic peptide levels in acute decompensated heart failure.</title>
        <authorList>
            <person name="Waldo S.W."/>
            <person name="Beede J."/>
            <person name="Isakson S."/>
            <person name="Villard-Saussine S."/>
            <person name="Fareh J."/>
            <person name="Clopton P."/>
            <person name="Fitzgerald R.L."/>
            <person name="Maisel A.S."/>
        </authorList>
    </citation>
    <scope>SUBCELLULAR LOCATION (NT-PROBNP AND BRAIN NATRIURETIC PEPTIDE 32)</scope>
</reference>
<reference key="23">
    <citation type="journal article" date="2010" name="Clin. Chem.">
        <title>Processing of pro-B-type natriuretic peptide: furin and corin as candidate convertases.</title>
        <authorList>
            <person name="Semenov A.G."/>
            <person name="Tamm N.N."/>
            <person name="Seferian K.R."/>
            <person name="Postnikov A.B."/>
            <person name="Karpova N.S."/>
            <person name="Serebryanaya D.V."/>
            <person name="Koshkina E.V."/>
            <person name="Krasnoselsky M.I."/>
            <person name="Katrukha A.G."/>
        </authorList>
    </citation>
    <scope>PROTEOLYTIC PROCESSING BY FURIN AND CORIN</scope>
    <scope>GLYCOSYLATION</scope>
    <scope>CLEAVAGE SITE</scope>
</reference>
<reference key="24">
    <citation type="journal article" date="2011" name="Biochem. Biophys. Res. Commun.">
        <title>Glycosylation and processing of pro-B-type natriuretic peptide in cardiomyocytes.</title>
        <authorList>
            <person name="Peng J."/>
            <person name="Jiang J."/>
            <person name="Wang W."/>
            <person name="Qi X."/>
            <person name="Sun X.L."/>
            <person name="Wu Q."/>
        </authorList>
    </citation>
    <scope>PROTEOLYTIC PROCESSING BY FURIN AND CORIN</scope>
    <scope>GLYCOSYLATION AT THR-97</scope>
    <scope>CLEAVAGE SITE</scope>
    <scope>MUTAGENESIS OF THR-97; ARG-99; ARG-102 AND LYS-105</scope>
</reference>
<reference key="25">
    <citation type="journal article" date="2011" name="Clin. Chem.">
        <title>Secretion of glycosylated pro-B-type natriuretic peptide from normal cardiomyocytes.</title>
        <authorList>
            <person name="Tonne J.M."/>
            <person name="Campbell J.M."/>
            <person name="Cataliotti A."/>
            <person name="Ohmine S."/>
            <person name="Thatava T."/>
            <person name="Sakuma T."/>
            <person name="Macheret F."/>
            <person name="Huntley B.K."/>
            <person name="Burnett J.C. Jr."/>
            <person name="Ikeda Y."/>
        </authorList>
    </citation>
    <scope>GLYCOSYLATION AT THR-97</scope>
    <scope>MUTAGENESIS OF THR-97</scope>
</reference>
<reference key="26">
    <citation type="journal article" date="2011" name="FEBS J.">
        <title>Neuropeptide Y, B-type natriuretic peptide, substance P and peptide YY are novel substrates of fibroblast activation protein-alpha.</title>
        <authorList>
            <person name="Keane F.M."/>
            <person name="Nadvi N.A."/>
            <person name="Yao T.W."/>
            <person name="Gorrell M.D."/>
        </authorList>
    </citation>
    <scope>PROTEOLYTIC CLEAVAGE BY FAP AND DPP4 (BRAIN NATRIURETIC PEPTIDE 32)</scope>
    <scope>CLEAVAGE SITE</scope>
</reference>
<reference key="27">
    <citation type="journal article" date="2015" name="Circ. Heart Fail.">
        <title>Pro-B-type natriuretic peptide-1-108 processing and degradation in human heart failure.</title>
        <authorList>
            <person name="Huntley B.K."/>
            <person name="Sandberg S.M."/>
            <person name="Heublein D.M."/>
            <person name="Sangaralingham S.J."/>
            <person name="Burnett J.C. Jr."/>
            <person name="Ichiki T."/>
        </authorList>
    </citation>
    <scope>FUNCTION (BRAIN NATRIURETIC PEPTIDE 32)</scope>
    <scope>SUBCELLULAR LOCATION (NT-PROBNP AND BRAIN NATRIURETIC PEPTIDE 32)</scope>
    <scope>PROTEOLYTIC PROCESSING</scope>
</reference>
<reference key="28">
    <citation type="journal article" date="2020" name="Glycobiology">
        <title>An affinity chromatography and glycoproteomics workflow to profile the chondroitin sulfate proteoglycans that interact with malarial VAR2CSA in the placenta and in cancer.</title>
        <authorList>
            <person name="Toledo A.G."/>
            <person name="Pihl J."/>
            <person name="Spliid C.B."/>
            <person name="Persson A."/>
            <person name="Nilsson J."/>
            <person name="Pereira M.A."/>
            <person name="Gustavsson T."/>
            <person name="Choudhary S."/>
            <person name="Oo H.Z."/>
            <person name="Black P.C."/>
            <person name="Daugaard M."/>
            <person name="Esko J.D."/>
            <person name="Larson G."/>
            <person name="Salanti A."/>
            <person name="Clausen T.M."/>
        </authorList>
    </citation>
    <scope>GLYCOSYLATION AT SER-41</scope>
</reference>
<reference key="29">
    <citation type="journal article" date="2006" name="J. Mol. Biol.">
        <title>Structural determinants of natriuretic peptide receptor specificity and degeneracy.</title>
        <authorList>
            <person name="He X.-L."/>
            <person name="Dukkipati A."/>
            <person name="Garcia K.C."/>
        </authorList>
    </citation>
    <scope>X-RAY CRYSTALLOGRAPHY (2.9 ANGSTROMS) OF 111-131 IN COMPLEX WITH NPR3</scope>
    <scope>FUNCTION (BRAIN NATRIURETIC PEPTIDE 32)</scope>
    <scope>DISULFIDE BOND</scope>
</reference>
<reference evidence="37" key="30">
    <citation type="journal article" date="2011" name="J. Biol. Chem.">
        <title>Insulin-degrading enzyme modulates the natriuretic peptide-mediated signaling response.</title>
        <authorList>
            <person name="Ralat L.A."/>
            <person name="Guo Q."/>
            <person name="Ren M."/>
            <person name="Funke T."/>
            <person name="Dickey D.M."/>
            <person name="Potter L.R."/>
            <person name="Tang W.J."/>
        </authorList>
    </citation>
    <scope>X-RAY CRYSTALLOGRAPHY (3.10 ANGSTROMS) OF 103-134</scope>
    <scope>FUNCTION (BRAIN NATRIURETIC PEPTIDE 32)</scope>
    <scope>PROTEOLYTIC DEGRADATION BY IDE (BRAIN NATRIURETIC PEPTIDE 32)</scope>
</reference>
<evidence type="ECO:0000250" key="1">
    <source>
        <dbReference type="UniProtKB" id="P07634"/>
    </source>
</evidence>
<evidence type="ECO:0000250" key="2">
    <source>
        <dbReference type="UniProtKB" id="P13205"/>
    </source>
</evidence>
<evidence type="ECO:0000250" key="3">
    <source>
        <dbReference type="UniProtKB" id="P40753"/>
    </source>
</evidence>
<evidence type="ECO:0000269" key="4">
    <source>
    </source>
</evidence>
<evidence type="ECO:0000269" key="5">
    <source>
    </source>
</evidence>
<evidence type="ECO:0000269" key="6">
    <source>
    </source>
</evidence>
<evidence type="ECO:0000269" key="7">
    <source>
    </source>
</evidence>
<evidence type="ECO:0000269" key="8">
    <source>
    </source>
</evidence>
<evidence type="ECO:0000269" key="9">
    <source>
    </source>
</evidence>
<evidence type="ECO:0000269" key="10">
    <source>
    </source>
</evidence>
<evidence type="ECO:0000269" key="11">
    <source>
    </source>
</evidence>
<evidence type="ECO:0000269" key="12">
    <source>
    </source>
</evidence>
<evidence type="ECO:0000269" key="13">
    <source>
    </source>
</evidence>
<evidence type="ECO:0000269" key="14">
    <source>
    </source>
</evidence>
<evidence type="ECO:0000269" key="15">
    <source>
    </source>
</evidence>
<evidence type="ECO:0000269" key="16">
    <source>
    </source>
</evidence>
<evidence type="ECO:0000269" key="17">
    <source>
    </source>
</evidence>
<evidence type="ECO:0000269" key="18">
    <source>
    </source>
</evidence>
<evidence type="ECO:0000269" key="19">
    <source>
    </source>
</evidence>
<evidence type="ECO:0000269" key="20">
    <source>
    </source>
</evidence>
<evidence type="ECO:0000269" key="21">
    <source>
    </source>
</evidence>
<evidence type="ECO:0000269" key="22">
    <source>
    </source>
</evidence>
<evidence type="ECO:0000269" key="23">
    <source>
    </source>
</evidence>
<evidence type="ECO:0000269" key="24">
    <source>
    </source>
</evidence>
<evidence type="ECO:0000269" key="25">
    <source>
    </source>
</evidence>
<evidence type="ECO:0000303" key="26">
    <source>
    </source>
</evidence>
<evidence type="ECO:0000303" key="27">
    <source>
    </source>
</evidence>
<evidence type="ECO:0000303" key="28">
    <source>
    </source>
</evidence>
<evidence type="ECO:0000303" key="29">
    <source>
    </source>
</evidence>
<evidence type="ECO:0000303" key="30">
    <source>
    </source>
</evidence>
<evidence type="ECO:0000303" key="31">
    <source>
    </source>
</evidence>
<evidence type="ECO:0000303" key="32">
    <source>
    </source>
</evidence>
<evidence type="ECO:0000303" key="33">
    <source>
    </source>
</evidence>
<evidence type="ECO:0000305" key="34"/>
<evidence type="ECO:0000305" key="35">
    <source>
    </source>
</evidence>
<evidence type="ECO:0000305" key="36">
    <source>
    </source>
</evidence>
<evidence type="ECO:0007744" key="37">
    <source>
        <dbReference type="PDB" id="3N56"/>
    </source>
</evidence>
<evidence type="ECO:0007829" key="38">
    <source>
        <dbReference type="PDB" id="1YK1"/>
    </source>
</evidence>
<sequence>MDPQTAPSRALLLLLFLHLAFLGGRSHPLGSPGSASDLETSGLQEQRNHLQGKLSELQVEQTSLEPLQESPRPTGVWKSREVATEGIRGHRKMVLYTLRAPRSPKMVQGSGCFGRKMDRISSSSGLGCKVLRRH</sequence>
<organism>
    <name type="scientific">Homo sapiens</name>
    <name type="common">Human</name>
    <dbReference type="NCBI Taxonomy" id="9606"/>
    <lineage>
        <taxon>Eukaryota</taxon>
        <taxon>Metazoa</taxon>
        <taxon>Chordata</taxon>
        <taxon>Craniata</taxon>
        <taxon>Vertebrata</taxon>
        <taxon>Euteleostomi</taxon>
        <taxon>Mammalia</taxon>
        <taxon>Eutheria</taxon>
        <taxon>Euarchontoglires</taxon>
        <taxon>Primates</taxon>
        <taxon>Haplorrhini</taxon>
        <taxon>Catarrhini</taxon>
        <taxon>Hominidae</taxon>
        <taxon>Homo</taxon>
    </lineage>
</organism>
<name>ANFB_HUMAN</name>
<gene>
    <name type="primary">NPPB</name>
</gene>
<dbReference type="EMBL" id="M31776">
    <property type="protein sequence ID" value="AAA35603.1"/>
    <property type="molecule type" value="Genomic_DNA"/>
</dbReference>
<dbReference type="EMBL" id="M25296">
    <property type="protein sequence ID" value="AAA36355.1"/>
    <property type="molecule type" value="mRNA"/>
</dbReference>
<dbReference type="EMBL" id="AB037521">
    <property type="protein sequence ID" value="BAA90441.1"/>
    <property type="status" value="ALT_FRAME"/>
    <property type="molecule type" value="Genomic_DNA"/>
</dbReference>
<dbReference type="EMBL" id="CR541976">
    <property type="protein sequence ID" value="CAG46774.1"/>
    <property type="molecule type" value="mRNA"/>
</dbReference>
<dbReference type="EMBL" id="CR542003">
    <property type="protein sequence ID" value="CAG46800.1"/>
    <property type="molecule type" value="mRNA"/>
</dbReference>
<dbReference type="EMBL" id="EU326309">
    <property type="protein sequence ID" value="ACA05917.1"/>
    <property type="molecule type" value="Genomic_DNA"/>
</dbReference>
<dbReference type="EMBL" id="AL021155">
    <property type="status" value="NOT_ANNOTATED_CDS"/>
    <property type="molecule type" value="Genomic_DNA"/>
</dbReference>
<dbReference type="EMBL" id="CH471130">
    <property type="protein sequence ID" value="EAW71718.1"/>
    <property type="molecule type" value="Genomic_DNA"/>
</dbReference>
<dbReference type="EMBL" id="BC025785">
    <property type="protein sequence ID" value="AAH25785.1"/>
    <property type="molecule type" value="mRNA"/>
</dbReference>
<dbReference type="CCDS" id="CCDS140.1"/>
<dbReference type="PIR" id="A36736">
    <property type="entry name" value="AWHUB"/>
</dbReference>
<dbReference type="RefSeq" id="NP_002512.1">
    <property type="nucleotide sequence ID" value="NM_002521.3"/>
</dbReference>
<dbReference type="PDB" id="1YK1">
    <property type="method" value="X-ray"/>
    <property type="resolution" value="2.90 A"/>
    <property type="chains" value="E=111-131"/>
</dbReference>
<dbReference type="PDB" id="3N56">
    <property type="method" value="X-ray"/>
    <property type="resolution" value="3.10 A"/>
    <property type="chains" value="C/D=103-134"/>
</dbReference>
<dbReference type="PDBsum" id="1YK1"/>
<dbReference type="PDBsum" id="3N56"/>
<dbReference type="SMR" id="P16860"/>
<dbReference type="BioGRID" id="110939">
    <property type="interactions" value="29"/>
</dbReference>
<dbReference type="FunCoup" id="P16860">
    <property type="interactions" value="260"/>
</dbReference>
<dbReference type="IntAct" id="P16860">
    <property type="interactions" value="23"/>
</dbReference>
<dbReference type="MINT" id="P16860"/>
<dbReference type="STRING" id="9606.ENSP00000365651"/>
<dbReference type="DrugBank" id="DB01136">
    <property type="generic name" value="Carvedilol"/>
</dbReference>
<dbReference type="DrugBank" id="DB06412">
    <property type="generic name" value="Oxymetholone"/>
</dbReference>
<dbReference type="GlyCosmos" id="P16860">
    <property type="glycosylation" value="7 sites, No reported glycans"/>
</dbReference>
<dbReference type="GlyGen" id="P16860">
    <property type="glycosylation" value="8 sites, 1 O-linked glycan (4 sites)"/>
</dbReference>
<dbReference type="iPTMnet" id="P16860"/>
<dbReference type="PhosphoSitePlus" id="P16860"/>
<dbReference type="BioMuta" id="NPPB"/>
<dbReference type="DMDM" id="113836"/>
<dbReference type="MassIVE" id="P16860"/>
<dbReference type="PaxDb" id="9606-ENSP00000365651"/>
<dbReference type="PeptideAtlas" id="P16860"/>
<dbReference type="ProteomicsDB" id="53393"/>
<dbReference type="ABCD" id="P16860">
    <property type="antibodies" value="9 sequenced antibodies"/>
</dbReference>
<dbReference type="Antibodypedia" id="13918">
    <property type="antibodies" value="1567 antibodies from 44 providers"/>
</dbReference>
<dbReference type="DNASU" id="4879"/>
<dbReference type="Ensembl" id="ENST00000376468.4">
    <property type="protein sequence ID" value="ENSP00000365651.3"/>
    <property type="gene ID" value="ENSG00000120937.9"/>
</dbReference>
<dbReference type="GeneID" id="4879"/>
<dbReference type="KEGG" id="hsa:4879"/>
<dbReference type="MANE-Select" id="ENST00000376468.4">
    <property type="protein sequence ID" value="ENSP00000365651.3"/>
    <property type="RefSeq nucleotide sequence ID" value="NM_002521.3"/>
    <property type="RefSeq protein sequence ID" value="NP_002512.1"/>
</dbReference>
<dbReference type="UCSC" id="uc001atj.4">
    <property type="organism name" value="human"/>
</dbReference>
<dbReference type="AGR" id="HGNC:7940"/>
<dbReference type="CTD" id="4879"/>
<dbReference type="DisGeNET" id="4879"/>
<dbReference type="GeneCards" id="NPPB"/>
<dbReference type="HGNC" id="HGNC:7940">
    <property type="gene designation" value="NPPB"/>
</dbReference>
<dbReference type="HPA" id="ENSG00000120937">
    <property type="expression patterns" value="Tissue enriched (heart)"/>
</dbReference>
<dbReference type="MIM" id="600295">
    <property type="type" value="gene"/>
</dbReference>
<dbReference type="neXtProt" id="NX_P16860"/>
<dbReference type="OpenTargets" id="ENSG00000120937"/>
<dbReference type="PharmGKB" id="PA31734"/>
<dbReference type="VEuPathDB" id="HostDB:ENSG00000120937"/>
<dbReference type="eggNOG" id="ENOG502SD0X">
    <property type="taxonomic scope" value="Eukaryota"/>
</dbReference>
<dbReference type="GeneTree" id="ENSGT00940000154513"/>
<dbReference type="HOGENOM" id="CLU_158067_0_0_1"/>
<dbReference type="InParanoid" id="P16860"/>
<dbReference type="OMA" id="RPTGVWK"/>
<dbReference type="OrthoDB" id="9892281at2759"/>
<dbReference type="PAN-GO" id="P16860">
    <property type="GO annotations" value="10 GO annotations based on evolutionary models"/>
</dbReference>
<dbReference type="PhylomeDB" id="P16860"/>
<dbReference type="TreeFam" id="TF106304"/>
<dbReference type="PathwayCommons" id="P16860"/>
<dbReference type="SignaLink" id="P16860"/>
<dbReference type="SIGNOR" id="P16860"/>
<dbReference type="BioGRID-ORCS" id="4879">
    <property type="hits" value="15 hits in 1154 CRISPR screens"/>
</dbReference>
<dbReference type="EvolutionaryTrace" id="P16860"/>
<dbReference type="GeneWiki" id="Brain_natriuretic_peptide"/>
<dbReference type="GenomeRNAi" id="4879"/>
<dbReference type="Pharos" id="P16860">
    <property type="development level" value="Tbio"/>
</dbReference>
<dbReference type="PRO" id="PR:P16860"/>
<dbReference type="Proteomes" id="UP000005640">
    <property type="component" value="Chromosome 1"/>
</dbReference>
<dbReference type="RNAct" id="P16860">
    <property type="molecule type" value="protein"/>
</dbReference>
<dbReference type="Bgee" id="ENSG00000120937">
    <property type="expression patterns" value="Expressed in right atrium auricular region and 101 other cell types or tissues"/>
</dbReference>
<dbReference type="GO" id="GO:0005737">
    <property type="term" value="C:cytoplasm"/>
    <property type="evidence" value="ECO:0000318"/>
    <property type="project" value="GO_Central"/>
</dbReference>
<dbReference type="GO" id="GO:0005576">
    <property type="term" value="C:extracellular region"/>
    <property type="evidence" value="ECO:0000304"/>
    <property type="project" value="UniProtKB"/>
</dbReference>
<dbReference type="GO" id="GO:0005615">
    <property type="term" value="C:extracellular space"/>
    <property type="evidence" value="ECO:0000318"/>
    <property type="project" value="GO_Central"/>
</dbReference>
<dbReference type="GO" id="GO:0032991">
    <property type="term" value="C:protein-containing complex"/>
    <property type="evidence" value="ECO:0000314"/>
    <property type="project" value="CAFA"/>
</dbReference>
<dbReference type="GO" id="GO:0008613">
    <property type="term" value="F:diuretic hormone activity"/>
    <property type="evidence" value="ECO:0000304"/>
    <property type="project" value="UniProtKB"/>
</dbReference>
<dbReference type="GO" id="GO:0005179">
    <property type="term" value="F:hormone activity"/>
    <property type="evidence" value="ECO:0000318"/>
    <property type="project" value="GO_Central"/>
</dbReference>
<dbReference type="GO" id="GO:0051427">
    <property type="term" value="F:hormone receptor binding"/>
    <property type="evidence" value="ECO:0000353"/>
    <property type="project" value="UniProtKB"/>
</dbReference>
<dbReference type="GO" id="GO:0005102">
    <property type="term" value="F:signaling receptor binding"/>
    <property type="evidence" value="ECO:0000314"/>
    <property type="project" value="UniProtKB"/>
</dbReference>
<dbReference type="GO" id="GO:0097746">
    <property type="term" value="P:blood vessel diameter maintenance"/>
    <property type="evidence" value="ECO:0000303"/>
    <property type="project" value="UniProtKB"/>
</dbReference>
<dbReference type="GO" id="GO:0007589">
    <property type="term" value="P:body fluid secretion"/>
    <property type="evidence" value="ECO:0000304"/>
    <property type="project" value="UniProtKB"/>
</dbReference>
<dbReference type="GO" id="GO:0003161">
    <property type="term" value="P:cardiac conduction system development"/>
    <property type="evidence" value="ECO:0000303"/>
    <property type="project" value="BHF-UCL"/>
</dbReference>
<dbReference type="GO" id="GO:0007166">
    <property type="term" value="P:cell surface receptor signaling pathway"/>
    <property type="evidence" value="ECO:0000303"/>
    <property type="project" value="UniProtKB"/>
</dbReference>
<dbReference type="GO" id="GO:0006182">
    <property type="term" value="P:cGMP biosynthetic process"/>
    <property type="evidence" value="ECO:0000314"/>
    <property type="project" value="GO_Central"/>
</dbReference>
<dbReference type="GO" id="GO:0019934">
    <property type="term" value="P:cGMP-mediated signaling"/>
    <property type="evidence" value="ECO:0000318"/>
    <property type="project" value="GO_Central"/>
</dbReference>
<dbReference type="GO" id="GO:0016525">
    <property type="term" value="P:negative regulation of angiogenesis"/>
    <property type="evidence" value="ECO:0000304"/>
    <property type="project" value="UniProtKB"/>
</dbReference>
<dbReference type="GO" id="GO:0030308">
    <property type="term" value="P:negative regulation of cell growth"/>
    <property type="evidence" value="ECO:0000303"/>
    <property type="project" value="UniProtKB"/>
</dbReference>
<dbReference type="GO" id="GO:0003085">
    <property type="term" value="P:negative regulation of systemic arterial blood pressure"/>
    <property type="evidence" value="ECO:0000318"/>
    <property type="project" value="GO_Central"/>
</dbReference>
<dbReference type="GO" id="GO:0007218">
    <property type="term" value="P:neuropeptide signaling pathway"/>
    <property type="evidence" value="ECO:0000318"/>
    <property type="project" value="GO_Central"/>
</dbReference>
<dbReference type="GO" id="GO:0035815">
    <property type="term" value="P:positive regulation of renal sodium excretion"/>
    <property type="evidence" value="ECO:0000304"/>
    <property type="project" value="UniProtKB"/>
</dbReference>
<dbReference type="GO" id="GO:0035810">
    <property type="term" value="P:positive regulation of urine volume"/>
    <property type="evidence" value="ECO:0000304"/>
    <property type="project" value="UniProtKB"/>
</dbReference>
<dbReference type="GO" id="GO:0006457">
    <property type="term" value="P:protein folding"/>
    <property type="evidence" value="ECO:0000314"/>
    <property type="project" value="CAFA"/>
</dbReference>
<dbReference type="GO" id="GO:0007168">
    <property type="term" value="P:receptor guanylyl cyclase signaling pathway"/>
    <property type="evidence" value="ECO:0000314"/>
    <property type="project" value="UniProtKB"/>
</dbReference>
<dbReference type="GO" id="GO:0008217">
    <property type="term" value="P:regulation of blood pressure"/>
    <property type="evidence" value="ECO:0000303"/>
    <property type="project" value="UniProtKB"/>
</dbReference>
<dbReference type="GO" id="GO:0043114">
    <property type="term" value="P:regulation of vascular permeability"/>
    <property type="evidence" value="ECO:0000304"/>
    <property type="project" value="UniProtKB"/>
</dbReference>
<dbReference type="GO" id="GO:0042311">
    <property type="term" value="P:vasodilation"/>
    <property type="evidence" value="ECO:0007669"/>
    <property type="project" value="UniProtKB-KW"/>
</dbReference>
<dbReference type="DisProt" id="DP00551"/>
<dbReference type="InterPro" id="IPR000663">
    <property type="entry name" value="Natr_peptide"/>
</dbReference>
<dbReference type="InterPro" id="IPR030480">
    <property type="entry name" value="Natr_peptide_CS"/>
</dbReference>
<dbReference type="InterPro" id="IPR050787">
    <property type="entry name" value="Natriuretic_peptide"/>
</dbReference>
<dbReference type="InterPro" id="IPR002408">
    <property type="entry name" value="Natriuretic_peptide_brain"/>
</dbReference>
<dbReference type="PANTHER" id="PTHR14066">
    <property type="entry name" value="ATRIAL NATRIURETIC FACTOR PRECURSOR"/>
    <property type="match status" value="1"/>
</dbReference>
<dbReference type="PANTHER" id="PTHR14066:SF10">
    <property type="entry name" value="NATRIURETIC PEPTIDES B"/>
    <property type="match status" value="1"/>
</dbReference>
<dbReference type="Pfam" id="PF00212">
    <property type="entry name" value="ANP"/>
    <property type="match status" value="1"/>
</dbReference>
<dbReference type="PRINTS" id="PR00712">
    <property type="entry name" value="BNATPEPTIDE"/>
</dbReference>
<dbReference type="SMART" id="SM00183">
    <property type="entry name" value="NAT_PEP"/>
    <property type="match status" value="1"/>
</dbReference>
<dbReference type="PROSITE" id="PS00263">
    <property type="entry name" value="NATRIURETIC_PEPTIDE"/>
    <property type="match status" value="1"/>
</dbReference>
<accession>P16860</accession>
<accession>B0ZBE9</accession>
<accession>Q6FGY0</accession>
<accession>Q9P2Q7</accession>
<proteinExistence type="evidence at protein level"/>
<protein>
    <recommendedName>
        <fullName>Natriuretic peptides B</fullName>
    </recommendedName>
    <alternativeName>
        <fullName evidence="31">Brain natriuretic factor prohormone</fullName>
        <shortName evidence="3">preproBNP</shortName>
        <shortName evidence="31">proBNP</shortName>
    </alternativeName>
    <alternativeName>
        <fullName evidence="1">Gamma-brain natriuretic peptide</fullName>
    </alternativeName>
    <alternativeName>
        <fullName evidence="2">Iso-ANP</fullName>
    </alternativeName>
    <component>
        <recommendedName>
            <fullName evidence="32">NT-proBNP</fullName>
        </recommendedName>
        <alternativeName>
            <fullName evidence="28">NT-pro-BNP</fullName>
        </alternativeName>
        <alternativeName>
            <fullName evidence="29">NT-proBNP(1-76)</fullName>
        </alternativeName>
    </component>
    <component>
        <recommendedName>
            <fullName evidence="27">proBNP(3-108)</fullName>
        </recommendedName>
    </component>
    <component>
        <recommendedName>
            <fullName evidence="34">Brain natriuretic peptide 32</fullName>
            <shortName evidence="34">BNP(1-32)</shortName>
            <shortName evidence="34">BNP-32</shortName>
        </recommendedName>
        <alternativeName>
            <fullName evidence="33">Brain natriuretic peptide</fullName>
            <shortName evidence="33">BNP</shortName>
        </alternativeName>
    </component>
    <component>
        <recommendedName>
            <fullName>BNP(1-30)</fullName>
        </recommendedName>
    </component>
    <component>
        <recommendedName>
            <fullName>BNP(1-29)</fullName>
        </recommendedName>
    </component>
    <component>
        <recommendedName>
            <fullName>BNP(1-28)</fullName>
        </recommendedName>
    </component>
    <component>
        <recommendedName>
            <fullName>BNP(2-31)</fullName>
        </recommendedName>
    </component>
    <component>
        <recommendedName>
            <fullName evidence="26">BNP(3-32)</fullName>
        </recommendedName>
        <alternativeName>
            <fullName evidence="26">des-SerPro-BNP</fullName>
        </alternativeName>
        <alternativeName>
            <fullName evidence="27">proBNP(79-108)</fullName>
        </alternativeName>
    </component>
    <component>
        <recommendedName>
            <fullName>BNP(3-30)</fullName>
        </recommendedName>
    </component>
    <component>
        <recommendedName>
            <fullName>BNP(3-29)</fullName>
        </recommendedName>
    </component>
    <component>
        <recommendedName>
            <fullName evidence="1">Brain natriuretic peptide 29</fullName>
            <shortName evidence="30">BNP(4-32)</shortName>
        </recommendedName>
    </component>
    <component>
        <recommendedName>
            <fullName>BNP(4-31)</fullName>
        </recommendedName>
    </component>
    <component>
        <recommendedName>
            <fullName>BNP(4-30)</fullName>
        </recommendedName>
    </component>
    <component>
        <recommendedName>
            <fullName>BNP(4-29)</fullName>
        </recommendedName>
    </component>
    <component>
        <recommendedName>
            <fullName>BNP(4-27)</fullName>
        </recommendedName>
    </component>
    <component>
        <recommendedName>
            <fullName>BNP(5-32)</fullName>
        </recommendedName>
    </component>
    <component>
        <recommendedName>
            <fullName>BNP(5-31)</fullName>
        </recommendedName>
    </component>
    <component>
        <recommendedName>
            <fullName>BNP(5-29)</fullName>
        </recommendedName>
    </component>
</protein>